<organism>
    <name type="scientific">Escherichia coli (strain K12)</name>
    <dbReference type="NCBI Taxonomy" id="83333"/>
    <lineage>
        <taxon>Bacteria</taxon>
        <taxon>Pseudomonadati</taxon>
        <taxon>Pseudomonadota</taxon>
        <taxon>Gammaproteobacteria</taxon>
        <taxon>Enterobacterales</taxon>
        <taxon>Enterobacteriaceae</taxon>
        <taxon>Escherichia</taxon>
    </lineage>
</organism>
<feature type="chain" id="PRO_0000096654" description="Putative oxidoreductase YceM">
    <location>
        <begin position="1"/>
        <end position="307"/>
    </location>
</feature>
<feature type="strand" evidence="2">
    <location>
        <begin position="4"/>
        <end position="9"/>
    </location>
</feature>
<feature type="helix" evidence="2">
    <location>
        <begin position="14"/>
        <end position="17"/>
    </location>
</feature>
<feature type="helix" evidence="2">
    <location>
        <begin position="19"/>
        <end position="24"/>
    </location>
</feature>
<feature type="strand" evidence="2">
    <location>
        <begin position="27"/>
        <end position="35"/>
    </location>
</feature>
<feature type="helix" evidence="2">
    <location>
        <begin position="42"/>
        <end position="49"/>
    </location>
</feature>
<feature type="helix" evidence="2">
    <location>
        <begin position="57"/>
        <end position="61"/>
    </location>
</feature>
<feature type="strand" evidence="2">
    <location>
        <begin position="65"/>
        <end position="69"/>
    </location>
</feature>
<feature type="helix" evidence="2">
    <location>
        <begin position="73"/>
        <end position="75"/>
    </location>
</feature>
<feature type="helix" evidence="2">
    <location>
        <begin position="76"/>
        <end position="85"/>
    </location>
</feature>
<feature type="strand" evidence="2">
    <location>
        <begin position="89"/>
        <end position="96"/>
    </location>
</feature>
<feature type="helix" evidence="2">
    <location>
        <begin position="100"/>
        <end position="112"/>
    </location>
</feature>
<feature type="strand" evidence="2">
    <location>
        <begin position="117"/>
        <end position="120"/>
    </location>
</feature>
<feature type="helix" evidence="2">
    <location>
        <begin position="122"/>
        <end position="125"/>
    </location>
</feature>
<feature type="helix" evidence="2">
    <location>
        <begin position="127"/>
        <end position="132"/>
    </location>
</feature>
<feature type="turn" evidence="2">
    <location>
        <begin position="133"/>
        <end position="135"/>
    </location>
</feature>
<feature type="helix" evidence="2">
    <location>
        <begin position="136"/>
        <end position="138"/>
    </location>
</feature>
<feature type="strand" evidence="2">
    <location>
        <begin position="141"/>
        <end position="146"/>
    </location>
</feature>
<feature type="helix" evidence="2">
    <location>
        <begin position="157"/>
        <end position="163"/>
    </location>
</feature>
<feature type="helix" evidence="2">
    <location>
        <begin position="165"/>
        <end position="175"/>
    </location>
</feature>
<feature type="turn" evidence="2">
    <location>
        <begin position="176"/>
        <end position="178"/>
    </location>
</feature>
<feature type="strand" evidence="2">
    <location>
        <begin position="182"/>
        <end position="189"/>
    </location>
</feature>
<feature type="strand" evidence="2">
    <location>
        <begin position="195"/>
        <end position="204"/>
    </location>
</feature>
<feature type="strand" evidence="2">
    <location>
        <begin position="207"/>
        <end position="218"/>
    </location>
</feature>
<feature type="strand" evidence="2">
    <location>
        <begin position="222"/>
        <end position="228"/>
    </location>
</feature>
<feature type="strand" evidence="2">
    <location>
        <begin position="231"/>
        <end position="236"/>
    </location>
</feature>
<feature type="turn" evidence="2">
    <location>
        <begin position="237"/>
        <end position="239"/>
    </location>
</feature>
<feature type="strand" evidence="2">
    <location>
        <begin position="240"/>
        <end position="247"/>
    </location>
</feature>
<feature type="strand" evidence="2">
    <location>
        <begin position="249"/>
        <end position="251"/>
    </location>
</feature>
<feature type="helix" evidence="2">
    <location>
        <begin position="260"/>
        <end position="263"/>
    </location>
</feature>
<feature type="helix" evidence="2">
    <location>
        <begin position="266"/>
        <end position="279"/>
    </location>
</feature>
<feature type="helix" evidence="2">
    <location>
        <begin position="287"/>
        <end position="290"/>
    </location>
</feature>
<feature type="helix" evidence="2">
    <location>
        <begin position="292"/>
        <end position="304"/>
    </location>
</feature>
<sequence length="307" mass="33682">MKKLRIGVVGLGGIAQKAWLPVLAAASDWTLQGAWSPTRAKALPICESWRIPYADSLSSLAASCDAVFVHSSTASHFDVVSTLLNAGVHVCVDKPLAENLRDAERLVELAARKKLTLMVGFNRRFAPLYGELKTQLATAASLRMDKHRSNSVGPHDLYFTLLDDYLHVVDTALWLSGGKASLDGGTLLTNDAGEMLFAEHHFSAGPLQITTCMHRRAGSQRETVQAVTDGALIDITDMREWREERGQGVVHKPIPGWQSTLEQRGFVGCARHFIECVQNQTVPQTAGEQAVLAQRIVDKIWRDAMSE</sequence>
<gene>
    <name type="primary">yceM</name>
    <name type="synonym">mviM</name>
    <name type="ordered locus">b1068</name>
    <name type="ordered locus">JW1055</name>
</gene>
<accession>P75931</accession>
<reference key="1">
    <citation type="journal article" date="1996" name="DNA Res.">
        <title>A 718-kb DNA sequence of the Escherichia coli K-12 genome corresponding to the 12.7-28.0 min region on the linkage map.</title>
        <authorList>
            <person name="Oshima T."/>
            <person name="Aiba H."/>
            <person name="Baba T."/>
            <person name="Fujita K."/>
            <person name="Hayashi K."/>
            <person name="Honjo A."/>
            <person name="Ikemoto K."/>
            <person name="Inada T."/>
            <person name="Itoh T."/>
            <person name="Kajihara M."/>
            <person name="Kanai K."/>
            <person name="Kashimoto K."/>
            <person name="Kimura S."/>
            <person name="Kitagawa M."/>
            <person name="Makino K."/>
            <person name="Masuda S."/>
            <person name="Miki T."/>
            <person name="Mizobuchi K."/>
            <person name="Mori H."/>
            <person name="Motomura K."/>
            <person name="Nakamura Y."/>
            <person name="Nashimoto H."/>
            <person name="Nishio Y."/>
            <person name="Saito N."/>
            <person name="Sampei G."/>
            <person name="Seki Y."/>
            <person name="Tagami H."/>
            <person name="Takemoto K."/>
            <person name="Wada C."/>
            <person name="Yamamoto Y."/>
            <person name="Yano M."/>
            <person name="Horiuchi T."/>
        </authorList>
    </citation>
    <scope>NUCLEOTIDE SEQUENCE [LARGE SCALE GENOMIC DNA]</scope>
    <source>
        <strain>K12 / W3110 / ATCC 27325 / DSM 5911</strain>
    </source>
</reference>
<reference key="2">
    <citation type="journal article" date="1997" name="Science">
        <title>The complete genome sequence of Escherichia coli K-12.</title>
        <authorList>
            <person name="Blattner F.R."/>
            <person name="Plunkett G. III"/>
            <person name="Bloch C.A."/>
            <person name="Perna N.T."/>
            <person name="Burland V."/>
            <person name="Riley M."/>
            <person name="Collado-Vides J."/>
            <person name="Glasner J.D."/>
            <person name="Rode C.K."/>
            <person name="Mayhew G.F."/>
            <person name="Gregor J."/>
            <person name="Davis N.W."/>
            <person name="Kirkpatrick H.A."/>
            <person name="Goeden M.A."/>
            <person name="Rose D.J."/>
            <person name="Mau B."/>
            <person name="Shao Y."/>
        </authorList>
    </citation>
    <scope>NUCLEOTIDE SEQUENCE [LARGE SCALE GENOMIC DNA]</scope>
    <source>
        <strain>K12 / MG1655 / ATCC 47076</strain>
    </source>
</reference>
<reference key="3">
    <citation type="journal article" date="2006" name="Mol. Syst. Biol.">
        <title>Highly accurate genome sequences of Escherichia coli K-12 strains MG1655 and W3110.</title>
        <authorList>
            <person name="Hayashi K."/>
            <person name="Morooka N."/>
            <person name="Yamamoto Y."/>
            <person name="Fujita K."/>
            <person name="Isono K."/>
            <person name="Choi S."/>
            <person name="Ohtsubo E."/>
            <person name="Baba T."/>
            <person name="Wanner B.L."/>
            <person name="Mori H."/>
            <person name="Horiuchi T."/>
        </authorList>
    </citation>
    <scope>NUCLEOTIDE SEQUENCE [LARGE SCALE GENOMIC DNA]</scope>
    <source>
        <strain>K12 / W3110 / ATCC 27325 / DSM 5911</strain>
    </source>
</reference>
<reference key="4">
    <citation type="submission" date="2004-06" db="PDB data bank">
        <title>Crystal structure of a putative oxidoreductase (virulence factor MviM homolog).</title>
        <authorList>
            <person name="Rajashankar K.R."/>
            <person name="Solorzano V."/>
            <person name="Kniewel R."/>
            <person name="Lima C.D."/>
        </authorList>
    </citation>
    <scope>X-RAY CRYSTALLOGRAPHY (2.70 ANGSTROMS) OF 2-307</scope>
</reference>
<comment type="similarity">
    <text evidence="1">Belongs to the Gfo/Idh/MocA family.</text>
</comment>
<protein>
    <recommendedName>
        <fullName>Putative oxidoreductase YceM</fullName>
        <ecNumber>1.-.-.-</ecNumber>
    </recommendedName>
</protein>
<name>YCEM_ECOLI</name>
<proteinExistence type="evidence at protein level"/>
<dbReference type="EC" id="1.-.-.-"/>
<dbReference type="EMBL" id="U00096">
    <property type="protein sequence ID" value="AAC74152.1"/>
    <property type="molecule type" value="Genomic_DNA"/>
</dbReference>
<dbReference type="EMBL" id="AP009048">
    <property type="protein sequence ID" value="BAA35876.1"/>
    <property type="molecule type" value="Genomic_DNA"/>
</dbReference>
<dbReference type="PIR" id="A64850">
    <property type="entry name" value="A64850"/>
</dbReference>
<dbReference type="RefSeq" id="NP_415586.1">
    <property type="nucleotide sequence ID" value="NC_000913.3"/>
</dbReference>
<dbReference type="RefSeq" id="WP_000736158.1">
    <property type="nucleotide sequence ID" value="NZ_STEB01000016.1"/>
</dbReference>
<dbReference type="PDB" id="1TLT">
    <property type="method" value="X-ray"/>
    <property type="resolution" value="2.70 A"/>
    <property type="chains" value="A/B=2-307"/>
</dbReference>
<dbReference type="PDBsum" id="1TLT"/>
<dbReference type="SMR" id="P75931"/>
<dbReference type="BioGRID" id="4259403">
    <property type="interactions" value="18"/>
</dbReference>
<dbReference type="FunCoup" id="P75931">
    <property type="interactions" value="30"/>
</dbReference>
<dbReference type="IntAct" id="P75931">
    <property type="interactions" value="3"/>
</dbReference>
<dbReference type="STRING" id="511145.b1068"/>
<dbReference type="jPOST" id="P75931"/>
<dbReference type="PaxDb" id="511145-b1068"/>
<dbReference type="EnsemblBacteria" id="AAC74152">
    <property type="protein sequence ID" value="AAC74152"/>
    <property type="gene ID" value="b1068"/>
</dbReference>
<dbReference type="GeneID" id="945204"/>
<dbReference type="KEGG" id="ecj:JW1055"/>
<dbReference type="KEGG" id="eco:b1068"/>
<dbReference type="KEGG" id="ecoc:C3026_06485"/>
<dbReference type="PATRIC" id="fig|1411691.4.peg.1200"/>
<dbReference type="EchoBASE" id="EB3638"/>
<dbReference type="eggNOG" id="COG0673">
    <property type="taxonomic scope" value="Bacteria"/>
</dbReference>
<dbReference type="HOGENOM" id="CLU_023194_23_0_6"/>
<dbReference type="InParanoid" id="P75931"/>
<dbReference type="OMA" id="VCQQYRI"/>
<dbReference type="OrthoDB" id="9781031at2"/>
<dbReference type="PhylomeDB" id="P75931"/>
<dbReference type="BioCyc" id="EcoCyc:G6560-MONOMER"/>
<dbReference type="EvolutionaryTrace" id="P75931"/>
<dbReference type="PRO" id="PR:P75931"/>
<dbReference type="Proteomes" id="UP000000625">
    <property type="component" value="Chromosome"/>
</dbReference>
<dbReference type="GO" id="GO:0000166">
    <property type="term" value="F:nucleotide binding"/>
    <property type="evidence" value="ECO:0007669"/>
    <property type="project" value="InterPro"/>
</dbReference>
<dbReference type="GO" id="GO:0016491">
    <property type="term" value="F:oxidoreductase activity"/>
    <property type="evidence" value="ECO:0007669"/>
    <property type="project" value="UniProtKB-KW"/>
</dbReference>
<dbReference type="Gene3D" id="3.30.360.10">
    <property type="entry name" value="Dihydrodipicolinate Reductase, domain 2"/>
    <property type="match status" value="1"/>
</dbReference>
<dbReference type="Gene3D" id="3.40.50.720">
    <property type="entry name" value="NAD(P)-binding Rossmann-like Domain"/>
    <property type="match status" value="1"/>
</dbReference>
<dbReference type="InterPro" id="IPR000683">
    <property type="entry name" value="Gfo/Idh/MocA-like_OxRdtase_N"/>
</dbReference>
<dbReference type="InterPro" id="IPR051317">
    <property type="entry name" value="Gfo/Idh/MocA_oxidoreduct"/>
</dbReference>
<dbReference type="InterPro" id="IPR036291">
    <property type="entry name" value="NAD(P)-bd_dom_sf"/>
</dbReference>
<dbReference type="InterPro" id="IPR048477">
    <property type="entry name" value="YceM-like_C"/>
</dbReference>
<dbReference type="PANTHER" id="PTHR43708">
    <property type="entry name" value="CONSERVED EXPRESSED OXIDOREDUCTASE (EUROFUNG)"/>
    <property type="match status" value="1"/>
</dbReference>
<dbReference type="PANTHER" id="PTHR43708:SF4">
    <property type="entry name" value="OXIDOREDUCTASE YCEM-RELATED"/>
    <property type="match status" value="1"/>
</dbReference>
<dbReference type="Pfam" id="PF01408">
    <property type="entry name" value="GFO_IDH_MocA"/>
    <property type="match status" value="1"/>
</dbReference>
<dbReference type="Pfam" id="PF21378">
    <property type="entry name" value="YceM-like_C"/>
    <property type="match status" value="1"/>
</dbReference>
<dbReference type="SUPFAM" id="SSF55347">
    <property type="entry name" value="Glyceraldehyde-3-phosphate dehydrogenase-like, C-terminal domain"/>
    <property type="match status" value="1"/>
</dbReference>
<dbReference type="SUPFAM" id="SSF51735">
    <property type="entry name" value="NAD(P)-binding Rossmann-fold domains"/>
    <property type="match status" value="1"/>
</dbReference>
<evidence type="ECO:0000305" key="1"/>
<evidence type="ECO:0007829" key="2">
    <source>
        <dbReference type="PDB" id="1TLT"/>
    </source>
</evidence>
<keyword id="KW-0002">3D-structure</keyword>
<keyword id="KW-0560">Oxidoreductase</keyword>
<keyword id="KW-1185">Reference proteome</keyword>